<proteinExistence type="inferred from homology"/>
<evidence type="ECO:0000250" key="1"/>
<evidence type="ECO:0000255" key="2"/>
<evidence type="ECO:0000305" key="3"/>
<name>MGTC_SALCH</name>
<feature type="chain" id="PRO_0000250527" description="Protein MgtC">
    <location>
        <begin position="1"/>
        <end position="231"/>
    </location>
</feature>
<feature type="transmembrane region" description="Helical" evidence="2">
    <location>
        <begin position="5"/>
        <end position="25"/>
    </location>
</feature>
<feature type="transmembrane region" description="Helical" evidence="2">
    <location>
        <begin position="39"/>
        <end position="59"/>
    </location>
</feature>
<feature type="transmembrane region" description="Helical" evidence="2">
    <location>
        <begin position="62"/>
        <end position="82"/>
    </location>
</feature>
<feature type="transmembrane region" description="Helical" evidence="2">
    <location>
        <begin position="103"/>
        <end position="123"/>
    </location>
</feature>
<protein>
    <recommendedName>
        <fullName>Protein MgtC</fullName>
    </recommendedName>
</protein>
<dbReference type="EMBL" id="AE017220">
    <property type="protein sequence ID" value="AAX67591.1"/>
    <property type="molecule type" value="Genomic_DNA"/>
</dbReference>
<dbReference type="RefSeq" id="WP_000392700.1">
    <property type="nucleotide sequence ID" value="NC_006905.1"/>
</dbReference>
<dbReference type="SMR" id="Q57I71"/>
<dbReference type="KEGG" id="sec:SCH_3685"/>
<dbReference type="HOGENOM" id="CLU_079292_0_0_6"/>
<dbReference type="Proteomes" id="UP000000538">
    <property type="component" value="Chromosome"/>
</dbReference>
<dbReference type="GO" id="GO:0005886">
    <property type="term" value="C:plasma membrane"/>
    <property type="evidence" value="ECO:0007669"/>
    <property type="project" value="UniProtKB-SubCell"/>
</dbReference>
<dbReference type="Gene3D" id="3.30.70.260">
    <property type="match status" value="1"/>
</dbReference>
<dbReference type="InterPro" id="IPR048640">
    <property type="entry name" value="MgtC-like_C"/>
</dbReference>
<dbReference type="InterPro" id="IPR003416">
    <property type="entry name" value="MgtC/SapB/SrpB/YhiD_fam"/>
</dbReference>
<dbReference type="InterPro" id="IPR049177">
    <property type="entry name" value="MgtC_SapB_SrpB_YhiD_N"/>
</dbReference>
<dbReference type="NCBIfam" id="NF011912">
    <property type="entry name" value="PRK15385.1"/>
    <property type="match status" value="1"/>
</dbReference>
<dbReference type="PANTHER" id="PTHR33778">
    <property type="entry name" value="PROTEIN MGTC"/>
    <property type="match status" value="1"/>
</dbReference>
<dbReference type="PANTHER" id="PTHR33778:SF3">
    <property type="entry name" value="PROTEIN MGTC"/>
    <property type="match status" value="1"/>
</dbReference>
<dbReference type="Pfam" id="PF02308">
    <property type="entry name" value="MgtC"/>
    <property type="match status" value="1"/>
</dbReference>
<dbReference type="Pfam" id="PF21770">
    <property type="entry name" value="MgtC_SapB_C"/>
    <property type="match status" value="1"/>
</dbReference>
<dbReference type="PRINTS" id="PR01837">
    <property type="entry name" value="MGTCSAPBPROT"/>
</dbReference>
<gene>
    <name type="primary">mgtC</name>
    <name type="ordered locus">SCH_3685</name>
</gene>
<accession>Q57I71</accession>
<sequence length="231" mass="25109">MEERMLMFPYILNLLAAMLLGALIGAERQWRQRMAGLRTNALVATGAAVFILSSMTTSPDSPGRIAAQIVSGIGFLGAGVIMREGMNVRGLNTAATLWCSAGIGVLCGLGQFKNALAATIIILCANILLREAAQRINQLPVSAEGEKRYILKVTCNKEDESEVRQWLLNIVKEAAICLQGLGSVPAQEQGYKEIRAELVGHADYRKTRELIISRIGDNDNITAIHWSIDSQ</sequence>
<comment type="function">
    <text evidence="1">Virulence factor required for growth in low Mg(2+) medium and for intramacrophage survival. May be involved in regulating membrane potential by activating Na(+)/K(+)-ATPase (By similarity).</text>
</comment>
<comment type="subcellular location">
    <subcellularLocation>
        <location evidence="3">Cell inner membrane</location>
        <topology evidence="3">Multi-pass membrane protein</topology>
    </subcellularLocation>
</comment>
<comment type="similarity">
    <text evidence="3">Belongs to the MgtC/SapB family.</text>
</comment>
<reference key="1">
    <citation type="journal article" date="2005" name="Nucleic Acids Res.">
        <title>The genome sequence of Salmonella enterica serovar Choleraesuis, a highly invasive and resistant zoonotic pathogen.</title>
        <authorList>
            <person name="Chiu C.-H."/>
            <person name="Tang P."/>
            <person name="Chu C."/>
            <person name="Hu S."/>
            <person name="Bao Q."/>
            <person name="Yu J."/>
            <person name="Chou Y.-Y."/>
            <person name="Wang H.-S."/>
            <person name="Lee Y.-S."/>
        </authorList>
    </citation>
    <scope>NUCLEOTIDE SEQUENCE [LARGE SCALE GENOMIC DNA]</scope>
    <source>
        <strain>SC-B67</strain>
    </source>
</reference>
<organism>
    <name type="scientific">Salmonella choleraesuis (strain SC-B67)</name>
    <dbReference type="NCBI Taxonomy" id="321314"/>
    <lineage>
        <taxon>Bacteria</taxon>
        <taxon>Pseudomonadati</taxon>
        <taxon>Pseudomonadota</taxon>
        <taxon>Gammaproteobacteria</taxon>
        <taxon>Enterobacterales</taxon>
        <taxon>Enterobacteriaceae</taxon>
        <taxon>Salmonella</taxon>
    </lineage>
</organism>
<keyword id="KW-0997">Cell inner membrane</keyword>
<keyword id="KW-1003">Cell membrane</keyword>
<keyword id="KW-0472">Membrane</keyword>
<keyword id="KW-0812">Transmembrane</keyword>
<keyword id="KW-1133">Transmembrane helix</keyword>
<keyword id="KW-0843">Virulence</keyword>